<keyword id="KW-0963">Cytoplasm</keyword>
<keyword id="KW-0206">Cytoskeleton</keyword>
<keyword id="KW-0256">Endoplasmic reticulum</keyword>
<keyword id="KW-0333">Golgi apparatus</keyword>
<keyword id="KW-0539">Nucleus</keyword>
<keyword id="KW-1185">Reference proteome</keyword>
<accession>Q5ZLK2</accession>
<sequence length="365" mass="40844">MADGGASPAQQEGEMSAAGPGLRRERQHRGSGRPPSARDLQLALAELYEDEAKRQSLRSDKPTTTKMSNSKGLKIDSFRSLRKPERSMSDDKENQRFYSGDSEYRGLQIWGASNNPSKIVAELFKEAKEHGAVPLDEASRTSGDFSKAKSFSGGGYRLGDSSQKHSEYIYGENQDVQILLKLWRNGFSLDDGELRSYSDPINAQFLESVKRGEIPVDLQRLVHGGQVNLDMEDHQEQEYVKPRLRFKAFSGEGQKLGSLTPEIVSTPSSPEEEDKSILNAPVLIDDSVPATKIQIRLADGSRLIQRFNQTHRIKDIRDFIIQSRPAFATTDFVLVTTFPNKELTDESLTLREADILNTVILQQLK</sequence>
<evidence type="ECO:0000250" key="1">
    <source>
        <dbReference type="UniProtKB" id="P0C627"/>
    </source>
</evidence>
<evidence type="ECO:0000250" key="2">
    <source>
        <dbReference type="UniProtKB" id="Q0KL01"/>
    </source>
</evidence>
<evidence type="ECO:0000250" key="3">
    <source>
        <dbReference type="UniProtKB" id="Q14CS0"/>
    </source>
</evidence>
<evidence type="ECO:0000255" key="4">
    <source>
        <dbReference type="PROSITE-ProRule" id="PRU00215"/>
    </source>
</evidence>
<evidence type="ECO:0000255" key="5">
    <source>
        <dbReference type="PROSITE-ProRule" id="PRU00732"/>
    </source>
</evidence>
<evidence type="ECO:0000256" key="6">
    <source>
        <dbReference type="SAM" id="MobiDB-lite"/>
    </source>
</evidence>
<evidence type="ECO:0000305" key="7"/>
<feature type="chain" id="PRO_0000315231" description="UBX domain-containing protein 2B">
    <location>
        <begin position="1"/>
        <end position="365"/>
    </location>
</feature>
<feature type="domain" description="SEP" evidence="5">
    <location>
        <begin position="175"/>
        <end position="240"/>
    </location>
</feature>
<feature type="domain" description="UBX" evidence="4">
    <location>
        <begin position="286"/>
        <end position="363"/>
    </location>
</feature>
<feature type="region of interest" description="Disordered" evidence="6">
    <location>
        <begin position="1"/>
        <end position="97"/>
    </location>
</feature>
<feature type="compositionally biased region" description="Basic and acidic residues" evidence="6">
    <location>
        <begin position="50"/>
        <end position="63"/>
    </location>
</feature>
<feature type="compositionally biased region" description="Basic and acidic residues" evidence="6">
    <location>
        <begin position="73"/>
        <end position="95"/>
    </location>
</feature>
<gene>
    <name type="primary">UBXN2B</name>
    <name type="ORF">RCJMB04_5m7</name>
</gene>
<protein>
    <recommendedName>
        <fullName>UBX domain-containing protein 2B</fullName>
    </recommendedName>
    <alternativeName>
        <fullName>NSFL1 cofactor p37</fullName>
    </alternativeName>
    <alternativeName>
        <fullName>p97 cofactor p37</fullName>
    </alternativeName>
</protein>
<comment type="function">
    <text evidence="3">Adapter protein required for Golgi and endoplasmic reticulum biogenesis. Involved in Golgi and endoplasmic reticulum maintenance during interphase and in their reassembly at the end of mitosis. Regulates the centrosomal levels of kinase AURKA/Aurora A during mitotic progression by promoting AURKA removal from centrosomes in prophase. Also, regulates spindle orientation during mitosis.</text>
</comment>
<comment type="subcellular location">
    <subcellularLocation>
        <location evidence="1">Nucleus</location>
    </subcellularLocation>
    <subcellularLocation>
        <location evidence="1">Cytoplasm</location>
        <location evidence="1">Cytosol</location>
    </subcellularLocation>
    <subcellularLocation>
        <location evidence="1">Endoplasmic reticulum</location>
    </subcellularLocation>
    <subcellularLocation>
        <location evidence="1">Golgi apparatus</location>
    </subcellularLocation>
    <subcellularLocation>
        <location evidence="2">Cytoplasm</location>
        <location evidence="2">Cytoskeleton</location>
        <location evidence="2">Microtubule organizing center</location>
        <location evidence="2">Centrosome</location>
    </subcellularLocation>
    <text evidence="2">Localizes to centrosome during mitotic prophase and metaphase.</text>
</comment>
<comment type="similarity">
    <text evidence="7">Belongs to the NSFL1C family.</text>
</comment>
<reference key="1">
    <citation type="journal article" date="2005" name="Genome Biol.">
        <title>Full-length cDNAs from chicken bursal lymphocytes to facilitate gene function analysis.</title>
        <authorList>
            <person name="Caldwell R.B."/>
            <person name="Kierzek A.M."/>
            <person name="Arakawa H."/>
            <person name="Bezzubov Y."/>
            <person name="Zaim J."/>
            <person name="Fiedler P."/>
            <person name="Kutter S."/>
            <person name="Blagodatski A."/>
            <person name="Kostovska D."/>
            <person name="Koter M."/>
            <person name="Plachy J."/>
            <person name="Carninci P."/>
            <person name="Hayashizaki Y."/>
            <person name="Buerstedde J.-M."/>
        </authorList>
    </citation>
    <scope>NUCLEOTIDE SEQUENCE [LARGE SCALE MRNA]</scope>
    <source>
        <strain>CB</strain>
        <tissue>Bursa of Fabricius</tissue>
    </source>
</reference>
<organism>
    <name type="scientific">Gallus gallus</name>
    <name type="common">Chicken</name>
    <dbReference type="NCBI Taxonomy" id="9031"/>
    <lineage>
        <taxon>Eukaryota</taxon>
        <taxon>Metazoa</taxon>
        <taxon>Chordata</taxon>
        <taxon>Craniata</taxon>
        <taxon>Vertebrata</taxon>
        <taxon>Euteleostomi</taxon>
        <taxon>Archelosauria</taxon>
        <taxon>Archosauria</taxon>
        <taxon>Dinosauria</taxon>
        <taxon>Saurischia</taxon>
        <taxon>Theropoda</taxon>
        <taxon>Coelurosauria</taxon>
        <taxon>Aves</taxon>
        <taxon>Neognathae</taxon>
        <taxon>Galloanserae</taxon>
        <taxon>Galliformes</taxon>
        <taxon>Phasianidae</taxon>
        <taxon>Phasianinae</taxon>
        <taxon>Gallus</taxon>
    </lineage>
</organism>
<proteinExistence type="evidence at transcript level"/>
<dbReference type="EMBL" id="AJ719732">
    <property type="protein sequence ID" value="CAG31391.1"/>
    <property type="molecule type" value="mRNA"/>
</dbReference>
<dbReference type="RefSeq" id="NP_001026194.1">
    <property type="nucleotide sequence ID" value="NM_001031023.1"/>
</dbReference>
<dbReference type="SMR" id="Q5ZLK2"/>
<dbReference type="FunCoup" id="Q5ZLK2">
    <property type="interactions" value="2053"/>
</dbReference>
<dbReference type="STRING" id="9031.ENSGALP00000046440"/>
<dbReference type="PaxDb" id="9031-ENSGALP00000024843"/>
<dbReference type="GeneID" id="421135"/>
<dbReference type="KEGG" id="gga:421135"/>
<dbReference type="CTD" id="137886"/>
<dbReference type="VEuPathDB" id="HostDB:geneid_421135"/>
<dbReference type="eggNOG" id="KOG2086">
    <property type="taxonomic scope" value="Eukaryota"/>
</dbReference>
<dbReference type="InParanoid" id="Q5ZLK2"/>
<dbReference type="OrthoDB" id="25887at2759"/>
<dbReference type="PhylomeDB" id="Q5ZLK2"/>
<dbReference type="PRO" id="PR:Q5ZLK2"/>
<dbReference type="Proteomes" id="UP000000539">
    <property type="component" value="Unassembled WGS sequence"/>
</dbReference>
<dbReference type="GO" id="GO:0005813">
    <property type="term" value="C:centrosome"/>
    <property type="evidence" value="ECO:0007669"/>
    <property type="project" value="UniProtKB-SubCell"/>
</dbReference>
<dbReference type="GO" id="GO:0005829">
    <property type="term" value="C:cytosol"/>
    <property type="evidence" value="ECO:0000318"/>
    <property type="project" value="GO_Central"/>
</dbReference>
<dbReference type="GO" id="GO:0005783">
    <property type="term" value="C:endoplasmic reticulum"/>
    <property type="evidence" value="ECO:0007669"/>
    <property type="project" value="UniProtKB-SubCell"/>
</dbReference>
<dbReference type="GO" id="GO:0005794">
    <property type="term" value="C:Golgi apparatus"/>
    <property type="evidence" value="ECO:0007669"/>
    <property type="project" value="UniProtKB-SubCell"/>
</dbReference>
<dbReference type="GO" id="GO:0005634">
    <property type="term" value="C:nucleus"/>
    <property type="evidence" value="ECO:0000318"/>
    <property type="project" value="GO_Central"/>
</dbReference>
<dbReference type="GO" id="GO:0043130">
    <property type="term" value="F:ubiquitin binding"/>
    <property type="evidence" value="ECO:0000318"/>
    <property type="project" value="GO_Central"/>
</dbReference>
<dbReference type="GO" id="GO:0000045">
    <property type="term" value="P:autophagosome assembly"/>
    <property type="evidence" value="ECO:0000318"/>
    <property type="project" value="GO_Central"/>
</dbReference>
<dbReference type="GO" id="GO:0007030">
    <property type="term" value="P:Golgi organization"/>
    <property type="evidence" value="ECO:0000318"/>
    <property type="project" value="GO_Central"/>
</dbReference>
<dbReference type="GO" id="GO:0061025">
    <property type="term" value="P:membrane fusion"/>
    <property type="evidence" value="ECO:0000318"/>
    <property type="project" value="GO_Central"/>
</dbReference>
<dbReference type="GO" id="GO:0031468">
    <property type="term" value="P:nuclear membrane reassembly"/>
    <property type="evidence" value="ECO:0000318"/>
    <property type="project" value="GO_Central"/>
</dbReference>
<dbReference type="GO" id="GO:0043161">
    <property type="term" value="P:proteasome-mediated ubiquitin-dependent protein catabolic process"/>
    <property type="evidence" value="ECO:0000318"/>
    <property type="project" value="GO_Central"/>
</dbReference>
<dbReference type="CDD" id="cd17161">
    <property type="entry name" value="UBX_UBXN2B"/>
    <property type="match status" value="1"/>
</dbReference>
<dbReference type="FunFam" id="3.30.420.210:FF:000001">
    <property type="entry name" value="NSFL1 (P97) cofactor (P47)"/>
    <property type="match status" value="1"/>
</dbReference>
<dbReference type="FunFam" id="3.10.20.90:FF:000135">
    <property type="entry name" value="UBX domain-containing protein 2B"/>
    <property type="match status" value="1"/>
</dbReference>
<dbReference type="Gene3D" id="3.10.20.90">
    <property type="entry name" value="Phosphatidylinositol 3-kinase Catalytic Subunit, Chain A, domain 1"/>
    <property type="match status" value="1"/>
</dbReference>
<dbReference type="Gene3D" id="3.30.420.210">
    <property type="entry name" value="SEP domain"/>
    <property type="match status" value="1"/>
</dbReference>
<dbReference type="InterPro" id="IPR036241">
    <property type="entry name" value="NSFL1C_SEP_dom_sf"/>
</dbReference>
<dbReference type="InterPro" id="IPR012989">
    <property type="entry name" value="SEP_domain"/>
</dbReference>
<dbReference type="InterPro" id="IPR029071">
    <property type="entry name" value="Ubiquitin-like_domsf"/>
</dbReference>
<dbReference type="InterPro" id="IPR001012">
    <property type="entry name" value="UBX_dom"/>
</dbReference>
<dbReference type="PANTHER" id="PTHR23333">
    <property type="entry name" value="UBX DOMAIN CONTAINING PROTEIN"/>
    <property type="match status" value="1"/>
</dbReference>
<dbReference type="PANTHER" id="PTHR23333:SF14">
    <property type="entry name" value="UBX DOMAIN-CONTAINING PROTEIN 2B"/>
    <property type="match status" value="1"/>
</dbReference>
<dbReference type="Pfam" id="PF08059">
    <property type="entry name" value="SEP"/>
    <property type="match status" value="1"/>
</dbReference>
<dbReference type="Pfam" id="PF00789">
    <property type="entry name" value="UBX"/>
    <property type="match status" value="1"/>
</dbReference>
<dbReference type="SMART" id="SM00553">
    <property type="entry name" value="SEP"/>
    <property type="match status" value="1"/>
</dbReference>
<dbReference type="SMART" id="SM00166">
    <property type="entry name" value="UBX"/>
    <property type="match status" value="1"/>
</dbReference>
<dbReference type="SUPFAM" id="SSF102848">
    <property type="entry name" value="NSFL1 (p97 ATPase) cofactor p47, SEP domain"/>
    <property type="match status" value="1"/>
</dbReference>
<dbReference type="SUPFAM" id="SSF54236">
    <property type="entry name" value="Ubiquitin-like"/>
    <property type="match status" value="1"/>
</dbReference>
<dbReference type="PROSITE" id="PS51399">
    <property type="entry name" value="SEP"/>
    <property type="match status" value="1"/>
</dbReference>
<dbReference type="PROSITE" id="PS50033">
    <property type="entry name" value="UBX"/>
    <property type="match status" value="1"/>
</dbReference>
<name>UBX2B_CHICK</name>